<keyword id="KW-1185">Reference proteome</keyword>
<name>Y3187_ERWT9</name>
<protein>
    <recommendedName>
        <fullName evidence="1">UPF0270 protein ETA_31870</fullName>
    </recommendedName>
</protein>
<accession>B2VK22</accession>
<feature type="chain" id="PRO_1000132014" description="UPF0270 protein ETA_31870">
    <location>
        <begin position="1"/>
        <end position="72"/>
    </location>
</feature>
<proteinExistence type="inferred from homology"/>
<gene>
    <name type="ordered locus">ETA_31870</name>
</gene>
<organism>
    <name type="scientific">Erwinia tasmaniensis (strain DSM 17950 / CFBP 7177 / CIP 109463 / NCPPB 4357 / Et1/99)</name>
    <dbReference type="NCBI Taxonomy" id="465817"/>
    <lineage>
        <taxon>Bacteria</taxon>
        <taxon>Pseudomonadati</taxon>
        <taxon>Pseudomonadota</taxon>
        <taxon>Gammaproteobacteria</taxon>
        <taxon>Enterobacterales</taxon>
        <taxon>Erwiniaceae</taxon>
        <taxon>Erwinia</taxon>
    </lineage>
</organism>
<evidence type="ECO:0000255" key="1">
    <source>
        <dbReference type="HAMAP-Rule" id="MF_00690"/>
    </source>
</evidence>
<sequence>MIIPWKELDPATLDSLIESFVLREGTDYGEHERSLEQKVADVRRQLSSGEVVLVWSELHESVNIMPRGQFHD</sequence>
<reference key="1">
    <citation type="journal article" date="2008" name="Environ. Microbiol.">
        <title>The genome of Erwinia tasmaniensis strain Et1/99, a non-pathogenic bacterium in the genus Erwinia.</title>
        <authorList>
            <person name="Kube M."/>
            <person name="Migdoll A.M."/>
            <person name="Mueller I."/>
            <person name="Kuhl H."/>
            <person name="Beck A."/>
            <person name="Reinhardt R."/>
            <person name="Geider K."/>
        </authorList>
    </citation>
    <scope>NUCLEOTIDE SEQUENCE [LARGE SCALE GENOMIC DNA]</scope>
    <source>
        <strain>DSM 17950 / CFBP 7177 / CIP 109463 / NCPPB 4357 / Et1/99</strain>
    </source>
</reference>
<dbReference type="EMBL" id="CU468135">
    <property type="protein sequence ID" value="CAO98233.1"/>
    <property type="molecule type" value="Genomic_DNA"/>
</dbReference>
<dbReference type="RefSeq" id="WP_012442865.1">
    <property type="nucleotide sequence ID" value="NC_010694.1"/>
</dbReference>
<dbReference type="SMR" id="B2VK22"/>
<dbReference type="STRING" id="465817.ETA_31870"/>
<dbReference type="KEGG" id="eta:ETA_31870"/>
<dbReference type="eggNOG" id="COG3089">
    <property type="taxonomic scope" value="Bacteria"/>
</dbReference>
<dbReference type="HOGENOM" id="CLU_186759_1_0_6"/>
<dbReference type="OrthoDB" id="6120729at2"/>
<dbReference type="Proteomes" id="UP000001726">
    <property type="component" value="Chromosome"/>
</dbReference>
<dbReference type="Gene3D" id="1.10.10.610">
    <property type="entry name" value="YehU-like"/>
    <property type="match status" value="1"/>
</dbReference>
<dbReference type="HAMAP" id="MF_00690">
    <property type="entry name" value="UPF0270"/>
    <property type="match status" value="1"/>
</dbReference>
<dbReference type="InterPro" id="IPR010648">
    <property type="entry name" value="UPF0270"/>
</dbReference>
<dbReference type="InterPro" id="IPR036685">
    <property type="entry name" value="YehU-like_sf"/>
</dbReference>
<dbReference type="NCBIfam" id="NF003438">
    <property type="entry name" value="PRK04966.1"/>
    <property type="match status" value="1"/>
</dbReference>
<dbReference type="Pfam" id="PF06794">
    <property type="entry name" value="UPF0270"/>
    <property type="match status" value="1"/>
</dbReference>
<dbReference type="PIRSF" id="PIRSF006169">
    <property type="entry name" value="UCP006169"/>
    <property type="match status" value="1"/>
</dbReference>
<dbReference type="SUPFAM" id="SSF118001">
    <property type="entry name" value="YehU-like"/>
    <property type="match status" value="1"/>
</dbReference>
<comment type="similarity">
    <text evidence="1">Belongs to the UPF0270 family.</text>
</comment>